<evidence type="ECO:0000250" key="1"/>
<evidence type="ECO:0000255" key="2">
    <source>
        <dbReference type="HAMAP-Rule" id="MF_00255"/>
    </source>
</evidence>
<sequence>MSEKTFLVEIGTEELPPKALRSLAESFAANFTAELDNAGLAHGTVQWFAAPRRLALKVANLAEAQPDREIEKRGPAIAQAFDAEGKPSKAAEGWARGCGITVDQAERLTTDKGEWLLYRAHVKGESTEALLPNMVATSLAKLPIPKLMRWGASDVHFVRPVHTVTLLLGDKVIPATILGIQSDRVIRGHRFMGEPEFTIDNADQYPEILRERGKVIADYEERKAKIKADAEEAARKIGGNADLSESLLEEVASLVEWPVVLTAKFEEKFLAVPSEALVYTMKGDQKYFPVYANDGKLLPNFIFVANIESKDPQQIISGNEKVVRPRLADAEFFFNTDRKKRLEDNLPRLQTVLFQQQLGTLRDKTDRIQALAGWIAEQIGADVNHATRAGLLSKCDLMTNMVFEFTDTQGVMGMHYARHDGEAEDVAVALNEQYQPRFAGDDLPSNPVACALAIADKMDTLAGIFGIGQHPKGDKDPFALRRAALGVLRIIVEKNLNLDLQTLTEEAVRLYGDKLTNANVVDDVIDFMLGRFRAWYQDEGYTVDTIQAVLARRPTRPADFDARMKAVSHFRTLEAAAALAAANKRVSNILAKSDEVLSDRVNASTLKEPEEIKLAMQVVVLRDKLEPYFAEGRYQDALVELAELREPVDAFFDKVMVMVDDKELRINRLTMLEKLRELFLRVADISLLQ</sequence>
<feature type="initiator methionine" description="Removed" evidence="1">
    <location>
        <position position="1"/>
    </location>
</feature>
<feature type="chain" id="PRO_0000072900" description="Glycine--tRNA ligase beta subunit">
    <location>
        <begin position="2"/>
        <end position="689"/>
    </location>
</feature>
<accession>P67030</accession>
<accession>Q8XDN7</accession>
<comment type="catalytic activity">
    <reaction evidence="2">
        <text>tRNA(Gly) + glycine + ATP = glycyl-tRNA(Gly) + AMP + diphosphate</text>
        <dbReference type="Rhea" id="RHEA:16013"/>
        <dbReference type="Rhea" id="RHEA-COMP:9664"/>
        <dbReference type="Rhea" id="RHEA-COMP:9683"/>
        <dbReference type="ChEBI" id="CHEBI:30616"/>
        <dbReference type="ChEBI" id="CHEBI:33019"/>
        <dbReference type="ChEBI" id="CHEBI:57305"/>
        <dbReference type="ChEBI" id="CHEBI:78442"/>
        <dbReference type="ChEBI" id="CHEBI:78522"/>
        <dbReference type="ChEBI" id="CHEBI:456215"/>
        <dbReference type="EC" id="6.1.1.14"/>
    </reaction>
</comment>
<comment type="subunit">
    <text evidence="2">Tetramer of two alpha and two beta subunits.</text>
</comment>
<comment type="subcellular location">
    <subcellularLocation>
        <location evidence="2">Cytoplasm</location>
    </subcellularLocation>
</comment>
<comment type="similarity">
    <text evidence="2">Belongs to the class-II aminoacyl-tRNA synthetase family.</text>
</comment>
<name>SYGB_ECOL6</name>
<organism>
    <name type="scientific">Escherichia coli O6:H1 (strain CFT073 / ATCC 700928 / UPEC)</name>
    <dbReference type="NCBI Taxonomy" id="199310"/>
    <lineage>
        <taxon>Bacteria</taxon>
        <taxon>Pseudomonadati</taxon>
        <taxon>Pseudomonadota</taxon>
        <taxon>Gammaproteobacteria</taxon>
        <taxon>Enterobacterales</taxon>
        <taxon>Enterobacteriaceae</taxon>
        <taxon>Escherichia</taxon>
    </lineage>
</organism>
<protein>
    <recommendedName>
        <fullName evidence="2">Glycine--tRNA ligase beta subunit</fullName>
        <ecNumber evidence="2">6.1.1.14</ecNumber>
    </recommendedName>
    <alternativeName>
        <fullName evidence="2">Glycyl-tRNA synthetase beta subunit</fullName>
        <shortName evidence="2">GlyRS</shortName>
    </alternativeName>
</protein>
<reference key="1">
    <citation type="journal article" date="2002" name="Proc. Natl. Acad. Sci. U.S.A.">
        <title>Extensive mosaic structure revealed by the complete genome sequence of uropathogenic Escherichia coli.</title>
        <authorList>
            <person name="Welch R.A."/>
            <person name="Burland V."/>
            <person name="Plunkett G. III"/>
            <person name="Redford P."/>
            <person name="Roesch P."/>
            <person name="Rasko D."/>
            <person name="Buckles E.L."/>
            <person name="Liou S.-R."/>
            <person name="Boutin A."/>
            <person name="Hackett J."/>
            <person name="Stroud D."/>
            <person name="Mayhew G.F."/>
            <person name="Rose D.J."/>
            <person name="Zhou S."/>
            <person name="Schwartz D.C."/>
            <person name="Perna N.T."/>
            <person name="Mobley H.L.T."/>
            <person name="Donnenberg M.S."/>
            <person name="Blattner F.R."/>
        </authorList>
    </citation>
    <scope>NUCLEOTIDE SEQUENCE [LARGE SCALE GENOMIC DNA]</scope>
    <source>
        <strain>CFT073 / ATCC 700928 / UPEC</strain>
    </source>
</reference>
<dbReference type="EC" id="6.1.1.14" evidence="2"/>
<dbReference type="EMBL" id="AE014075">
    <property type="protein sequence ID" value="AAN82814.1"/>
    <property type="molecule type" value="Genomic_DNA"/>
</dbReference>
<dbReference type="RefSeq" id="WP_001291788.1">
    <property type="nucleotide sequence ID" value="NZ_CP051263.1"/>
</dbReference>
<dbReference type="SMR" id="P67030"/>
<dbReference type="STRING" id="199310.c4378"/>
<dbReference type="GeneID" id="75173758"/>
<dbReference type="KEGG" id="ecc:c4378"/>
<dbReference type="eggNOG" id="COG0751">
    <property type="taxonomic scope" value="Bacteria"/>
</dbReference>
<dbReference type="HOGENOM" id="CLU_007220_2_2_6"/>
<dbReference type="BioCyc" id="ECOL199310:C4378-MONOMER"/>
<dbReference type="Proteomes" id="UP000001410">
    <property type="component" value="Chromosome"/>
</dbReference>
<dbReference type="GO" id="GO:0005829">
    <property type="term" value="C:cytosol"/>
    <property type="evidence" value="ECO:0007669"/>
    <property type="project" value="TreeGrafter"/>
</dbReference>
<dbReference type="GO" id="GO:0004814">
    <property type="term" value="F:arginine-tRNA ligase activity"/>
    <property type="evidence" value="ECO:0007669"/>
    <property type="project" value="InterPro"/>
</dbReference>
<dbReference type="GO" id="GO:0005524">
    <property type="term" value="F:ATP binding"/>
    <property type="evidence" value="ECO:0007669"/>
    <property type="project" value="UniProtKB-UniRule"/>
</dbReference>
<dbReference type="GO" id="GO:0004820">
    <property type="term" value="F:glycine-tRNA ligase activity"/>
    <property type="evidence" value="ECO:0007669"/>
    <property type="project" value="UniProtKB-UniRule"/>
</dbReference>
<dbReference type="GO" id="GO:0006420">
    <property type="term" value="P:arginyl-tRNA aminoacylation"/>
    <property type="evidence" value="ECO:0007669"/>
    <property type="project" value="InterPro"/>
</dbReference>
<dbReference type="GO" id="GO:0006426">
    <property type="term" value="P:glycyl-tRNA aminoacylation"/>
    <property type="evidence" value="ECO:0007669"/>
    <property type="project" value="UniProtKB-UniRule"/>
</dbReference>
<dbReference type="HAMAP" id="MF_00255">
    <property type="entry name" value="Gly_tRNA_synth_beta"/>
    <property type="match status" value="1"/>
</dbReference>
<dbReference type="InterPro" id="IPR008909">
    <property type="entry name" value="DALR_anticod-bd"/>
</dbReference>
<dbReference type="InterPro" id="IPR015944">
    <property type="entry name" value="Gly-tRNA-synth_bsu"/>
</dbReference>
<dbReference type="InterPro" id="IPR006194">
    <property type="entry name" value="Gly-tRNA-synth_heterodimer"/>
</dbReference>
<dbReference type="NCBIfam" id="TIGR00211">
    <property type="entry name" value="glyS"/>
    <property type="match status" value="1"/>
</dbReference>
<dbReference type="PANTHER" id="PTHR30075:SF2">
    <property type="entry name" value="GLYCINE--TRNA LIGASE, CHLOROPLASTIC_MITOCHONDRIAL 2"/>
    <property type="match status" value="1"/>
</dbReference>
<dbReference type="PANTHER" id="PTHR30075">
    <property type="entry name" value="GLYCYL-TRNA SYNTHETASE"/>
    <property type="match status" value="1"/>
</dbReference>
<dbReference type="Pfam" id="PF05746">
    <property type="entry name" value="DALR_1"/>
    <property type="match status" value="1"/>
</dbReference>
<dbReference type="Pfam" id="PF02092">
    <property type="entry name" value="tRNA_synt_2f"/>
    <property type="match status" value="1"/>
</dbReference>
<dbReference type="PRINTS" id="PR01045">
    <property type="entry name" value="TRNASYNTHGB"/>
</dbReference>
<dbReference type="SUPFAM" id="SSF109604">
    <property type="entry name" value="HD-domain/PDEase-like"/>
    <property type="match status" value="1"/>
</dbReference>
<dbReference type="PROSITE" id="PS50861">
    <property type="entry name" value="AA_TRNA_LIGASE_II_GLYAB"/>
    <property type="match status" value="1"/>
</dbReference>
<keyword id="KW-0030">Aminoacyl-tRNA synthetase</keyword>
<keyword id="KW-0067">ATP-binding</keyword>
<keyword id="KW-0963">Cytoplasm</keyword>
<keyword id="KW-0436">Ligase</keyword>
<keyword id="KW-0547">Nucleotide-binding</keyword>
<keyword id="KW-0648">Protein biosynthesis</keyword>
<keyword id="KW-1185">Reference proteome</keyword>
<proteinExistence type="inferred from homology"/>
<gene>
    <name evidence="2" type="primary">glyS</name>
    <name type="ordered locus">c4378</name>
</gene>